<keyword id="KW-0963">Cytoplasm</keyword>
<keyword id="KW-0444">Lipid biosynthesis</keyword>
<keyword id="KW-0443">Lipid metabolism</keyword>
<keyword id="KW-0594">Phospholipid biosynthesis</keyword>
<keyword id="KW-1208">Phospholipid metabolism</keyword>
<keyword id="KW-1185">Reference proteome</keyword>
<keyword id="KW-0808">Transferase</keyword>
<evidence type="ECO:0000255" key="1">
    <source>
        <dbReference type="HAMAP-Rule" id="MF_00019"/>
    </source>
</evidence>
<dbReference type="EC" id="2.3.1.274" evidence="1"/>
<dbReference type="EMBL" id="CP001614">
    <property type="protein sequence ID" value="ACR12902.1"/>
    <property type="molecule type" value="Genomic_DNA"/>
</dbReference>
<dbReference type="RefSeq" id="WP_015819015.1">
    <property type="nucleotide sequence ID" value="NC_012997.1"/>
</dbReference>
<dbReference type="SMR" id="C5BU56"/>
<dbReference type="STRING" id="377629.TERTU_1717"/>
<dbReference type="KEGG" id="ttu:TERTU_1717"/>
<dbReference type="eggNOG" id="COG0416">
    <property type="taxonomic scope" value="Bacteria"/>
</dbReference>
<dbReference type="HOGENOM" id="CLU_039379_1_0_6"/>
<dbReference type="OrthoDB" id="9806408at2"/>
<dbReference type="UniPathway" id="UPA00085"/>
<dbReference type="Proteomes" id="UP000009080">
    <property type="component" value="Chromosome"/>
</dbReference>
<dbReference type="GO" id="GO:0005737">
    <property type="term" value="C:cytoplasm"/>
    <property type="evidence" value="ECO:0007669"/>
    <property type="project" value="UniProtKB-SubCell"/>
</dbReference>
<dbReference type="GO" id="GO:0043811">
    <property type="term" value="F:phosphate:acyl-[acyl carrier protein] acyltransferase activity"/>
    <property type="evidence" value="ECO:0007669"/>
    <property type="project" value="UniProtKB-UniRule"/>
</dbReference>
<dbReference type="GO" id="GO:0006633">
    <property type="term" value="P:fatty acid biosynthetic process"/>
    <property type="evidence" value="ECO:0007669"/>
    <property type="project" value="UniProtKB-UniRule"/>
</dbReference>
<dbReference type="GO" id="GO:0008654">
    <property type="term" value="P:phospholipid biosynthetic process"/>
    <property type="evidence" value="ECO:0007669"/>
    <property type="project" value="UniProtKB-KW"/>
</dbReference>
<dbReference type="Gene3D" id="3.40.718.10">
    <property type="entry name" value="Isopropylmalate Dehydrogenase"/>
    <property type="match status" value="1"/>
</dbReference>
<dbReference type="HAMAP" id="MF_00019">
    <property type="entry name" value="PlsX"/>
    <property type="match status" value="1"/>
</dbReference>
<dbReference type="InterPro" id="IPR003664">
    <property type="entry name" value="FA_synthesis"/>
</dbReference>
<dbReference type="InterPro" id="IPR012281">
    <property type="entry name" value="Phospholipid_synth_PlsX-like"/>
</dbReference>
<dbReference type="NCBIfam" id="TIGR00182">
    <property type="entry name" value="plsX"/>
    <property type="match status" value="1"/>
</dbReference>
<dbReference type="PANTHER" id="PTHR30100">
    <property type="entry name" value="FATTY ACID/PHOSPHOLIPID SYNTHESIS PROTEIN PLSX"/>
    <property type="match status" value="1"/>
</dbReference>
<dbReference type="PANTHER" id="PTHR30100:SF1">
    <property type="entry name" value="PHOSPHATE ACYLTRANSFERASE"/>
    <property type="match status" value="1"/>
</dbReference>
<dbReference type="Pfam" id="PF02504">
    <property type="entry name" value="FA_synthesis"/>
    <property type="match status" value="1"/>
</dbReference>
<dbReference type="PIRSF" id="PIRSF002465">
    <property type="entry name" value="Phsphlp_syn_PlsX"/>
    <property type="match status" value="1"/>
</dbReference>
<dbReference type="SUPFAM" id="SSF53659">
    <property type="entry name" value="Isocitrate/Isopropylmalate dehydrogenase-like"/>
    <property type="match status" value="1"/>
</dbReference>
<comment type="function">
    <text evidence="1">Catalyzes the reversible formation of acyl-phosphate (acyl-PO(4)) from acyl-[acyl-carrier-protein] (acyl-ACP). This enzyme utilizes acyl-ACP as fatty acyl donor, but not acyl-CoA.</text>
</comment>
<comment type="catalytic activity">
    <reaction evidence="1">
        <text>a fatty acyl-[ACP] + phosphate = an acyl phosphate + holo-[ACP]</text>
        <dbReference type="Rhea" id="RHEA:42292"/>
        <dbReference type="Rhea" id="RHEA-COMP:9685"/>
        <dbReference type="Rhea" id="RHEA-COMP:14125"/>
        <dbReference type="ChEBI" id="CHEBI:43474"/>
        <dbReference type="ChEBI" id="CHEBI:59918"/>
        <dbReference type="ChEBI" id="CHEBI:64479"/>
        <dbReference type="ChEBI" id="CHEBI:138651"/>
        <dbReference type="EC" id="2.3.1.274"/>
    </reaction>
</comment>
<comment type="pathway">
    <text evidence="1">Lipid metabolism; phospholipid metabolism.</text>
</comment>
<comment type="subunit">
    <text evidence="1">Homodimer. Probably interacts with PlsY.</text>
</comment>
<comment type="subcellular location">
    <subcellularLocation>
        <location evidence="1">Cytoplasm</location>
    </subcellularLocation>
    <text evidence="1">Associated with the membrane possibly through PlsY.</text>
</comment>
<comment type="similarity">
    <text evidence="1">Belongs to the PlsX family.</text>
</comment>
<sequence length="330" mass="34913">MSQQIHLSIDAMGGDQGPRLVIEASIAFLKRYPHTRLTLFGDFADLEAAVKGSVCASRMSLIQTEITVAADERAGSALRHKQGSSMWKAVELVATGQADACVSGGNTGALMAMGRKLIKTFPGVSRPAICKPIPTARGSSFILDLGANLNCSAQQLVQFALMGSALARVYGRENPSVALLNVGTELSKGSESILTAAALMREHPTINFAGFVEGHGLYQGEVDVVVCDGLIGNVALKVSEGVAAFIASSLKAKLRENRFNQIAGLIVEPLLRRWMAAYNPSNFNGAAMLGLQRTLVKSHGGTDKFGFEQALVAAVDQVSANIPERIAQCL</sequence>
<reference key="1">
    <citation type="journal article" date="2009" name="PLoS ONE">
        <title>The complete genome of Teredinibacter turnerae T7901: an intracellular endosymbiont of marine wood-boring bivalves (shipworms).</title>
        <authorList>
            <person name="Yang J.C."/>
            <person name="Madupu R."/>
            <person name="Durkin A.S."/>
            <person name="Ekborg N.A."/>
            <person name="Pedamallu C.S."/>
            <person name="Hostetler J.B."/>
            <person name="Radune D."/>
            <person name="Toms B.S."/>
            <person name="Henrissat B."/>
            <person name="Coutinho P.M."/>
            <person name="Schwarz S."/>
            <person name="Field L."/>
            <person name="Trindade-Silva A.E."/>
            <person name="Soares C.A.G."/>
            <person name="Elshahawi S."/>
            <person name="Hanora A."/>
            <person name="Schmidt E.W."/>
            <person name="Haygood M.G."/>
            <person name="Posfai J."/>
            <person name="Benner J."/>
            <person name="Madinger C."/>
            <person name="Nove J."/>
            <person name="Anton B."/>
            <person name="Chaudhary K."/>
            <person name="Foster J."/>
            <person name="Holman A."/>
            <person name="Kumar S."/>
            <person name="Lessard P.A."/>
            <person name="Luyten Y.A."/>
            <person name="Slatko B."/>
            <person name="Wood N."/>
            <person name="Wu B."/>
            <person name="Teplitski M."/>
            <person name="Mougous J.D."/>
            <person name="Ward N."/>
            <person name="Eisen J.A."/>
            <person name="Badger J.H."/>
            <person name="Distel D.L."/>
        </authorList>
    </citation>
    <scope>NUCLEOTIDE SEQUENCE [LARGE SCALE GENOMIC DNA]</scope>
    <source>
        <strain>ATCC 39867 / T7901</strain>
    </source>
</reference>
<proteinExistence type="inferred from homology"/>
<feature type="chain" id="PRO_1000201898" description="Phosphate acyltransferase">
    <location>
        <begin position="1"/>
        <end position="330"/>
    </location>
</feature>
<organism>
    <name type="scientific">Teredinibacter turnerae (strain ATCC 39867 / T7901)</name>
    <dbReference type="NCBI Taxonomy" id="377629"/>
    <lineage>
        <taxon>Bacteria</taxon>
        <taxon>Pseudomonadati</taxon>
        <taxon>Pseudomonadota</taxon>
        <taxon>Gammaproteobacteria</taxon>
        <taxon>Cellvibrionales</taxon>
        <taxon>Cellvibrionaceae</taxon>
        <taxon>Teredinibacter</taxon>
    </lineage>
</organism>
<gene>
    <name evidence="1" type="primary">plsX</name>
    <name type="ordered locus">TERTU_1717</name>
</gene>
<accession>C5BU56</accession>
<protein>
    <recommendedName>
        <fullName evidence="1">Phosphate acyltransferase</fullName>
        <ecNumber evidence="1">2.3.1.274</ecNumber>
    </recommendedName>
    <alternativeName>
        <fullName evidence="1">Acyl-ACP phosphotransacylase</fullName>
    </alternativeName>
    <alternativeName>
        <fullName evidence="1">Acyl-[acyl-carrier-protein]--phosphate acyltransferase</fullName>
    </alternativeName>
    <alternativeName>
        <fullName evidence="1">Phosphate-acyl-ACP acyltransferase</fullName>
    </alternativeName>
</protein>
<name>PLSX_TERTT</name>